<gene>
    <name type="ORF">SPBC3D6.06c</name>
</gene>
<keyword id="KW-0067">ATP-binding</keyword>
<keyword id="KW-0963">Cytoplasm</keyword>
<keyword id="KW-0418">Kinase</keyword>
<keyword id="KW-0460">Magnesium</keyword>
<keyword id="KW-0479">Metal-binding</keyword>
<keyword id="KW-0545">Nucleotide biosynthesis</keyword>
<keyword id="KW-0547">Nucleotide-binding</keyword>
<keyword id="KW-1185">Reference proteome</keyword>
<keyword id="KW-0808">Transferase</keyword>
<name>KPR5_SCHPO</name>
<evidence type="ECO:0000250" key="1"/>
<evidence type="ECO:0000250" key="2">
    <source>
        <dbReference type="UniProtKB" id="P38063"/>
    </source>
</evidence>
<evidence type="ECO:0000255" key="3"/>
<evidence type="ECO:0000312" key="4">
    <source>
        <dbReference type="EMBL" id="CAB09126.1"/>
    </source>
</evidence>
<organism>
    <name type="scientific">Schizosaccharomyces pombe (strain 972 / ATCC 24843)</name>
    <name type="common">Fission yeast</name>
    <dbReference type="NCBI Taxonomy" id="284812"/>
    <lineage>
        <taxon>Eukaryota</taxon>
        <taxon>Fungi</taxon>
        <taxon>Dikarya</taxon>
        <taxon>Ascomycota</taxon>
        <taxon>Taphrinomycotina</taxon>
        <taxon>Schizosaccharomycetes</taxon>
        <taxon>Schizosaccharomycetales</taxon>
        <taxon>Schizosaccharomycetaceae</taxon>
        <taxon>Schizosaccharomyces</taxon>
    </lineage>
</organism>
<comment type="function">
    <text evidence="1">5-phosphoribose 1-diphosphate synthase involved in nucleotide, histidine, and tryptophan biosynthesis. Active in heteromultimeric complexes with other 5-phosphoribose 1-diphosphate synthases (By similarity).</text>
</comment>
<comment type="catalytic activity">
    <reaction evidence="2">
        <text>D-ribose 5-phosphate + ATP = 5-phospho-alpha-D-ribose 1-diphosphate + AMP + H(+)</text>
        <dbReference type="Rhea" id="RHEA:15609"/>
        <dbReference type="ChEBI" id="CHEBI:15378"/>
        <dbReference type="ChEBI" id="CHEBI:30616"/>
        <dbReference type="ChEBI" id="CHEBI:58017"/>
        <dbReference type="ChEBI" id="CHEBI:78346"/>
        <dbReference type="ChEBI" id="CHEBI:456215"/>
        <dbReference type="EC" id="2.7.6.1"/>
    </reaction>
</comment>
<comment type="pathway">
    <text evidence="2">Metabolic intermediate biosynthesis; 5-phospho-alpha-D-ribose 1-diphosphate biosynthesis; 5-phospho-alpha-D-ribose 1-diphosphate from D-ribose 5-phosphate (route I): step 1/1.</text>
</comment>
<comment type="subcellular location">
    <subcellularLocation>
        <location evidence="2">Cytoplasm</location>
    </subcellularLocation>
</comment>
<comment type="similarity">
    <text evidence="3">Belongs to the ribose-phosphate pyrophosphokinase family.</text>
</comment>
<accession>P87171</accession>
<feature type="chain" id="PRO_0000309464" description="Ribose-phosphate pyrophosphokinase 5">
    <location>
        <begin position="1"/>
        <end position="341"/>
    </location>
</feature>
<feature type="binding site" evidence="2 3">
    <location>
        <position position="152"/>
    </location>
    <ligand>
        <name>Mg(2+)</name>
        <dbReference type="ChEBI" id="CHEBI:18420"/>
    </ligand>
</feature>
<feature type="binding site" evidence="2 3">
    <location>
        <position position="154"/>
    </location>
    <ligand>
        <name>Mg(2+)</name>
        <dbReference type="ChEBI" id="CHEBI:18420"/>
    </ligand>
</feature>
<feature type="binding site" evidence="2 3">
    <location>
        <position position="167"/>
    </location>
    <ligand>
        <name>Mg(2+)</name>
        <dbReference type="ChEBI" id="CHEBI:18420"/>
    </ligand>
</feature>
<sequence>MKNLVVFGTESHPKLTESICEHLCLDIGRVELSKFSNGETSVRIKQSVRGCDVYIVSPASGQVNDHLMELLIMISACKTASAKKVTAVLPVFPYSRQPDQKFSFSGAPLSDLQDAVVPCKKQTGYHPWIAQSGTLVADLLMCSGADHIITMDLHDPQFQGFFDIPVDNLFGRPLLKHYISLNIPNYHNAVIVSPDAGGAKRATAIADALGLDFALIHKNRRHEYGTSLMLVGDVQNKVAILIDDLIDTAYTLVRAAEFVKEHGASKIYALVTHCVLSGDAIERVKLSCIDKLIVTNTAPQTITPSGCFDIIDVAPTFAEAIRRIHNGESISILYDHNQVWV</sequence>
<proteinExistence type="inferred from homology"/>
<dbReference type="EC" id="2.7.6.1"/>
<dbReference type="EMBL" id="CU329671">
    <property type="protein sequence ID" value="CAB09126.1"/>
    <property type="molecule type" value="Genomic_DNA"/>
</dbReference>
<dbReference type="PIR" id="T40366">
    <property type="entry name" value="T40366"/>
</dbReference>
<dbReference type="SMR" id="P87171"/>
<dbReference type="BioGRID" id="277529">
    <property type="interactions" value="9"/>
</dbReference>
<dbReference type="FunCoup" id="P87171">
    <property type="interactions" value="217"/>
</dbReference>
<dbReference type="STRING" id="284812.P87171"/>
<dbReference type="PaxDb" id="4896-SPBC3D6.06c.1"/>
<dbReference type="EnsemblFungi" id="SPBC3D6.06c.1">
    <property type="protein sequence ID" value="SPBC3D6.06c.1:pep"/>
    <property type="gene ID" value="SPBC3D6.06c"/>
</dbReference>
<dbReference type="KEGG" id="spo:2541014"/>
<dbReference type="PomBase" id="SPBC3D6.06c"/>
<dbReference type="VEuPathDB" id="FungiDB:SPBC3D6.06c"/>
<dbReference type="eggNOG" id="KOG1448">
    <property type="taxonomic scope" value="Eukaryota"/>
</dbReference>
<dbReference type="HOGENOM" id="CLU_033546_1_0_1"/>
<dbReference type="InParanoid" id="P87171"/>
<dbReference type="OMA" id="MMLVGDI"/>
<dbReference type="PhylomeDB" id="P87171"/>
<dbReference type="Reactome" id="R-SPO-73843">
    <property type="pathway name" value="5-Phosphoribose 1-diphosphate biosynthesis"/>
</dbReference>
<dbReference type="UniPathway" id="UPA00087">
    <property type="reaction ID" value="UER00172"/>
</dbReference>
<dbReference type="PRO" id="PR:P87171"/>
<dbReference type="Proteomes" id="UP000002485">
    <property type="component" value="Chromosome II"/>
</dbReference>
<dbReference type="GO" id="GO:0005737">
    <property type="term" value="C:cytoplasm"/>
    <property type="evidence" value="ECO:0000318"/>
    <property type="project" value="GO_Central"/>
</dbReference>
<dbReference type="GO" id="GO:0002189">
    <property type="term" value="C:ribose phosphate diphosphokinase complex"/>
    <property type="evidence" value="ECO:0000266"/>
    <property type="project" value="PomBase"/>
</dbReference>
<dbReference type="GO" id="GO:0005524">
    <property type="term" value="F:ATP binding"/>
    <property type="evidence" value="ECO:0007669"/>
    <property type="project" value="UniProtKB-KW"/>
</dbReference>
<dbReference type="GO" id="GO:0016301">
    <property type="term" value="F:kinase activity"/>
    <property type="evidence" value="ECO:0007669"/>
    <property type="project" value="UniProtKB-KW"/>
</dbReference>
<dbReference type="GO" id="GO:0000287">
    <property type="term" value="F:magnesium ion binding"/>
    <property type="evidence" value="ECO:0007669"/>
    <property type="project" value="InterPro"/>
</dbReference>
<dbReference type="GO" id="GO:0004749">
    <property type="term" value="F:ribose phosphate diphosphokinase activity"/>
    <property type="evidence" value="ECO:0000318"/>
    <property type="project" value="GO_Central"/>
</dbReference>
<dbReference type="GO" id="GO:0006015">
    <property type="term" value="P:5-phosphoribose 1-diphosphate biosynthetic process"/>
    <property type="evidence" value="ECO:0000318"/>
    <property type="project" value="GO_Central"/>
</dbReference>
<dbReference type="GO" id="GO:0006164">
    <property type="term" value="P:purine nucleotide biosynthetic process"/>
    <property type="evidence" value="ECO:0000318"/>
    <property type="project" value="GO_Central"/>
</dbReference>
<dbReference type="GO" id="GO:0009156">
    <property type="term" value="P:ribonucleoside monophosphate biosynthetic process"/>
    <property type="evidence" value="ECO:0007669"/>
    <property type="project" value="InterPro"/>
</dbReference>
<dbReference type="CDD" id="cd06223">
    <property type="entry name" value="PRTases_typeI"/>
    <property type="match status" value="1"/>
</dbReference>
<dbReference type="FunFam" id="3.40.50.2020:FF:000007">
    <property type="entry name" value="Ribose-phosphate pyrophosphokinase"/>
    <property type="match status" value="1"/>
</dbReference>
<dbReference type="FunFam" id="3.40.50.2020:FF:000005">
    <property type="entry name" value="Ribose-phosphate pyrophosphokinase 1"/>
    <property type="match status" value="1"/>
</dbReference>
<dbReference type="Gene3D" id="3.40.50.2020">
    <property type="match status" value="2"/>
</dbReference>
<dbReference type="InterPro" id="IPR000842">
    <property type="entry name" value="PRib_PP_synth_CS"/>
</dbReference>
<dbReference type="InterPro" id="IPR029099">
    <property type="entry name" value="Pribosyltran_N"/>
</dbReference>
<dbReference type="InterPro" id="IPR000836">
    <property type="entry name" value="PRibTrfase_dom"/>
</dbReference>
<dbReference type="InterPro" id="IPR029057">
    <property type="entry name" value="PRTase-like"/>
</dbReference>
<dbReference type="InterPro" id="IPR005946">
    <property type="entry name" value="Rib-P_diPkinase"/>
</dbReference>
<dbReference type="NCBIfam" id="TIGR01251">
    <property type="entry name" value="ribP_PPkin"/>
    <property type="match status" value="1"/>
</dbReference>
<dbReference type="PANTHER" id="PTHR10210">
    <property type="entry name" value="RIBOSE-PHOSPHATE DIPHOSPHOKINASE FAMILY MEMBER"/>
    <property type="match status" value="1"/>
</dbReference>
<dbReference type="PANTHER" id="PTHR10210:SF36">
    <property type="entry name" value="RIBOSE-PHOSPHATE PYROPHOSPHOKINASE 5"/>
    <property type="match status" value="1"/>
</dbReference>
<dbReference type="Pfam" id="PF14572">
    <property type="entry name" value="Pribosyl_synth"/>
    <property type="match status" value="1"/>
</dbReference>
<dbReference type="Pfam" id="PF13793">
    <property type="entry name" value="Pribosyltran_N"/>
    <property type="match status" value="1"/>
</dbReference>
<dbReference type="SMART" id="SM01400">
    <property type="entry name" value="Pribosyltran_N"/>
    <property type="match status" value="1"/>
</dbReference>
<dbReference type="SUPFAM" id="SSF53271">
    <property type="entry name" value="PRTase-like"/>
    <property type="match status" value="1"/>
</dbReference>
<dbReference type="PROSITE" id="PS00114">
    <property type="entry name" value="PRPP_SYNTHASE"/>
    <property type="match status" value="1"/>
</dbReference>
<dbReference type="PROSITE" id="PS00103">
    <property type="entry name" value="PUR_PYR_PR_TRANSFER"/>
    <property type="match status" value="1"/>
</dbReference>
<protein>
    <recommendedName>
        <fullName>Ribose-phosphate pyrophosphokinase 5</fullName>
        <ecNumber>2.7.6.1</ecNumber>
    </recommendedName>
    <alternativeName>
        <fullName>Phosphoribosyl pyrophosphate synthase 5</fullName>
    </alternativeName>
</protein>
<reference evidence="4" key="1">
    <citation type="journal article" date="2002" name="Nature">
        <title>The genome sequence of Schizosaccharomyces pombe.</title>
        <authorList>
            <person name="Wood V."/>
            <person name="Gwilliam R."/>
            <person name="Rajandream M.A."/>
            <person name="Lyne M.H."/>
            <person name="Lyne R."/>
            <person name="Stewart A."/>
            <person name="Sgouros J.G."/>
            <person name="Peat N."/>
            <person name="Hayles J."/>
            <person name="Baker S.G."/>
            <person name="Basham D."/>
            <person name="Bowman S."/>
            <person name="Brooks K."/>
            <person name="Brown D."/>
            <person name="Brown S."/>
            <person name="Chillingworth T."/>
            <person name="Churcher C.M."/>
            <person name="Collins M."/>
            <person name="Connor R."/>
            <person name="Cronin A."/>
            <person name="Davis P."/>
            <person name="Feltwell T."/>
            <person name="Fraser A."/>
            <person name="Gentles S."/>
            <person name="Goble A."/>
            <person name="Hamlin N."/>
            <person name="Harris D.E."/>
            <person name="Hidalgo J."/>
            <person name="Hodgson G."/>
            <person name="Holroyd S."/>
            <person name="Hornsby T."/>
            <person name="Howarth S."/>
            <person name="Huckle E.J."/>
            <person name="Hunt S."/>
            <person name="Jagels K."/>
            <person name="James K.D."/>
            <person name="Jones L."/>
            <person name="Jones M."/>
            <person name="Leather S."/>
            <person name="McDonald S."/>
            <person name="McLean J."/>
            <person name="Mooney P."/>
            <person name="Moule S."/>
            <person name="Mungall K.L."/>
            <person name="Murphy L.D."/>
            <person name="Niblett D."/>
            <person name="Odell C."/>
            <person name="Oliver K."/>
            <person name="O'Neil S."/>
            <person name="Pearson D."/>
            <person name="Quail M.A."/>
            <person name="Rabbinowitsch E."/>
            <person name="Rutherford K.M."/>
            <person name="Rutter S."/>
            <person name="Saunders D."/>
            <person name="Seeger K."/>
            <person name="Sharp S."/>
            <person name="Skelton J."/>
            <person name="Simmonds M.N."/>
            <person name="Squares R."/>
            <person name="Squares S."/>
            <person name="Stevens K."/>
            <person name="Taylor K."/>
            <person name="Taylor R.G."/>
            <person name="Tivey A."/>
            <person name="Walsh S.V."/>
            <person name="Warren T."/>
            <person name="Whitehead S."/>
            <person name="Woodward J.R."/>
            <person name="Volckaert G."/>
            <person name="Aert R."/>
            <person name="Robben J."/>
            <person name="Grymonprez B."/>
            <person name="Weltjens I."/>
            <person name="Vanstreels E."/>
            <person name="Rieger M."/>
            <person name="Schaefer M."/>
            <person name="Mueller-Auer S."/>
            <person name="Gabel C."/>
            <person name="Fuchs M."/>
            <person name="Duesterhoeft A."/>
            <person name="Fritzc C."/>
            <person name="Holzer E."/>
            <person name="Moestl D."/>
            <person name="Hilbert H."/>
            <person name="Borzym K."/>
            <person name="Langer I."/>
            <person name="Beck A."/>
            <person name="Lehrach H."/>
            <person name="Reinhardt R."/>
            <person name="Pohl T.M."/>
            <person name="Eger P."/>
            <person name="Zimmermann W."/>
            <person name="Wedler H."/>
            <person name="Wambutt R."/>
            <person name="Purnelle B."/>
            <person name="Goffeau A."/>
            <person name="Cadieu E."/>
            <person name="Dreano S."/>
            <person name="Gloux S."/>
            <person name="Lelaure V."/>
            <person name="Mottier S."/>
            <person name="Galibert F."/>
            <person name="Aves S.J."/>
            <person name="Xiang Z."/>
            <person name="Hunt C."/>
            <person name="Moore K."/>
            <person name="Hurst S.M."/>
            <person name="Lucas M."/>
            <person name="Rochet M."/>
            <person name="Gaillardin C."/>
            <person name="Tallada V.A."/>
            <person name="Garzon A."/>
            <person name="Thode G."/>
            <person name="Daga R.R."/>
            <person name="Cruzado L."/>
            <person name="Jimenez J."/>
            <person name="Sanchez M."/>
            <person name="del Rey F."/>
            <person name="Benito J."/>
            <person name="Dominguez A."/>
            <person name="Revuelta J.L."/>
            <person name="Moreno S."/>
            <person name="Armstrong J."/>
            <person name="Forsburg S.L."/>
            <person name="Cerutti L."/>
            <person name="Lowe T."/>
            <person name="McCombie W.R."/>
            <person name="Paulsen I."/>
            <person name="Potashkin J."/>
            <person name="Shpakovski G.V."/>
            <person name="Ussery D."/>
            <person name="Barrell B.G."/>
            <person name="Nurse P."/>
        </authorList>
    </citation>
    <scope>NUCLEOTIDE SEQUENCE [LARGE SCALE GENOMIC DNA]</scope>
    <source>
        <strain>972 / ATCC 24843</strain>
    </source>
</reference>